<keyword id="KW-0963">Cytoplasm</keyword>
<keyword id="KW-0489">Methyltransferase</keyword>
<keyword id="KW-1185">Reference proteome</keyword>
<keyword id="KW-0694">RNA-binding</keyword>
<keyword id="KW-0698">rRNA processing</keyword>
<keyword id="KW-0949">S-adenosyl-L-methionine</keyword>
<keyword id="KW-0808">Transferase</keyword>
<feature type="chain" id="PRO_0000366756" description="Ribosomal RNA large subunit methyltransferase K/L">
    <location>
        <begin position="1"/>
        <end position="717"/>
    </location>
</feature>
<feature type="domain" description="THUMP" evidence="1">
    <location>
        <begin position="44"/>
        <end position="155"/>
    </location>
</feature>
<reference key="1">
    <citation type="journal article" date="2005" name="Nat. Genet.">
        <title>The complete genome sequence of Francisella tularensis, the causative agent of tularemia.</title>
        <authorList>
            <person name="Larsson P."/>
            <person name="Oyston P.C.F."/>
            <person name="Chain P."/>
            <person name="Chu M.C."/>
            <person name="Duffield M."/>
            <person name="Fuxelius H.-H."/>
            <person name="Garcia E."/>
            <person name="Haelltorp G."/>
            <person name="Johansson D."/>
            <person name="Isherwood K.E."/>
            <person name="Karp P.D."/>
            <person name="Larsson E."/>
            <person name="Liu Y."/>
            <person name="Michell S."/>
            <person name="Prior J."/>
            <person name="Prior R."/>
            <person name="Malfatti S."/>
            <person name="Sjoestedt A."/>
            <person name="Svensson K."/>
            <person name="Thompson N."/>
            <person name="Vergez L."/>
            <person name="Wagg J.K."/>
            <person name="Wren B.W."/>
            <person name="Lindler L.E."/>
            <person name="Andersson S.G.E."/>
            <person name="Forsman M."/>
            <person name="Titball R.W."/>
        </authorList>
    </citation>
    <scope>NUCLEOTIDE SEQUENCE [LARGE SCALE GENOMIC DNA]</scope>
    <source>
        <strain>SCHU S4 / Schu 4</strain>
    </source>
</reference>
<organism>
    <name type="scientific">Francisella tularensis subsp. tularensis (strain SCHU S4 / Schu 4)</name>
    <dbReference type="NCBI Taxonomy" id="177416"/>
    <lineage>
        <taxon>Bacteria</taxon>
        <taxon>Pseudomonadati</taxon>
        <taxon>Pseudomonadota</taxon>
        <taxon>Gammaproteobacteria</taxon>
        <taxon>Thiotrichales</taxon>
        <taxon>Francisellaceae</taxon>
        <taxon>Francisella</taxon>
    </lineage>
</organism>
<evidence type="ECO:0000255" key="1">
    <source>
        <dbReference type="HAMAP-Rule" id="MF_01858"/>
    </source>
</evidence>
<accession>Q5NGC3</accession>
<comment type="function">
    <text evidence="1">Specifically methylates the guanine in position 2445 (m2G2445) and the guanine in position 2069 (m7G2069) of 23S rRNA.</text>
</comment>
<comment type="catalytic activity">
    <reaction evidence="1">
        <text>guanosine(2445) in 23S rRNA + S-adenosyl-L-methionine = N(2)-methylguanosine(2445) in 23S rRNA + S-adenosyl-L-homocysteine + H(+)</text>
        <dbReference type="Rhea" id="RHEA:42740"/>
        <dbReference type="Rhea" id="RHEA-COMP:10215"/>
        <dbReference type="Rhea" id="RHEA-COMP:10216"/>
        <dbReference type="ChEBI" id="CHEBI:15378"/>
        <dbReference type="ChEBI" id="CHEBI:57856"/>
        <dbReference type="ChEBI" id="CHEBI:59789"/>
        <dbReference type="ChEBI" id="CHEBI:74269"/>
        <dbReference type="ChEBI" id="CHEBI:74481"/>
        <dbReference type="EC" id="2.1.1.173"/>
    </reaction>
</comment>
<comment type="catalytic activity">
    <reaction evidence="1">
        <text>guanosine(2069) in 23S rRNA + S-adenosyl-L-methionine = N(2)-methylguanosine(2069) in 23S rRNA + S-adenosyl-L-homocysteine + H(+)</text>
        <dbReference type="Rhea" id="RHEA:43772"/>
        <dbReference type="Rhea" id="RHEA-COMP:10688"/>
        <dbReference type="Rhea" id="RHEA-COMP:10689"/>
        <dbReference type="ChEBI" id="CHEBI:15378"/>
        <dbReference type="ChEBI" id="CHEBI:57856"/>
        <dbReference type="ChEBI" id="CHEBI:59789"/>
        <dbReference type="ChEBI" id="CHEBI:74269"/>
        <dbReference type="ChEBI" id="CHEBI:74481"/>
        <dbReference type="EC" id="2.1.1.264"/>
    </reaction>
</comment>
<comment type="subcellular location">
    <subcellularLocation>
        <location evidence="1">Cytoplasm</location>
    </subcellularLocation>
</comment>
<comment type="similarity">
    <text evidence="1">Belongs to the methyltransferase superfamily. RlmKL family.</text>
</comment>
<protein>
    <recommendedName>
        <fullName evidence="1">Ribosomal RNA large subunit methyltransferase K/L</fullName>
    </recommendedName>
    <domain>
        <recommendedName>
            <fullName evidence="1">23S rRNA m2G2445 methyltransferase</fullName>
            <ecNumber evidence="1">2.1.1.173</ecNumber>
        </recommendedName>
        <alternativeName>
            <fullName evidence="1">rRNA (guanine-N(2)-)-methyltransferase RlmL</fullName>
        </alternativeName>
    </domain>
    <domain>
        <recommendedName>
            <fullName evidence="1">23S rRNA m7G2069 methyltransferase</fullName>
            <ecNumber evidence="1">2.1.1.264</ecNumber>
        </recommendedName>
        <alternativeName>
            <fullName evidence="1">rRNA (guanine-N(7)-)-methyltransferase RlmK</fullName>
        </alternativeName>
    </domain>
</protein>
<sequence length="717" mass="83483">MQKFTFFVSCAKGIELLLKDELERLGISSQEKLAGVEFEGSIKDAYKVCIYSYLASQVMLKVATDKVINQQDLYEFISSINWMDYFAVDKTFKIIISGKHYDFNNTMFVSQKTKDAIVDQFRNVTNQRPNIDTENPDNVIKLHLHKQFVNVFLCLNIDSLHKRSYRQFQGQAPLKESLAAAILIKAGWLEELKKHQPILIDPMCGSGTILIEAALMAKNIAPVLLNKEFKIFNSKFHNQELWDNLLEIAKNSQKVTNAIICGFDIDNNVLDKAQRNIYQAGVEDVITVKRQDIRDLENEFESEGLIVTNPPYGERLYGDQLDELLDIFNGFGNRLSQDFYGWKVAVLTSFADSIKEMQLRTTERNKFYNGAIETILYQFEINEHAKFKHETQLEKNIRIAEASAQKSDEHIDFANKLKKNLKSLKPWLKQTGLECYRLYDADIPTFAVAVDVYSEHIFLQEYRADATIDQNIAKQRFYQAIYQIHKTLDIKYENIHTRVRQRQKGKEQYQKENDKNKFHIINEFDAKFYVNFDDYLDTGIFLDHRKIRQLVAKAAKNKTLLNLFSYTCTASVHAALKGAKTTSVDMSNTYLEWGKNNFTLNNIDAKKHSFIQADCISWLKTNKDKFDVIFLDPPTFSNSKRMDDILDIQRDHELLINLAMDSLKKDGILYFSNNYRRFKMSPQILEKFNCENIDKICLSRDFLSNKNIHNCWEIKYK</sequence>
<name>RLMKL_FRATT</name>
<proteinExistence type="inferred from homology"/>
<gene>
    <name evidence="1" type="primary">rlmL</name>
    <name type="ordered locus">FTT_0923</name>
</gene>
<dbReference type="EC" id="2.1.1.173" evidence="1"/>
<dbReference type="EC" id="2.1.1.264" evidence="1"/>
<dbReference type="EMBL" id="AJ749949">
    <property type="protein sequence ID" value="CAG45556.1"/>
    <property type="molecule type" value="Genomic_DNA"/>
</dbReference>
<dbReference type="RefSeq" id="WP_003020954.1">
    <property type="nucleotide sequence ID" value="NC_006570.2"/>
</dbReference>
<dbReference type="RefSeq" id="YP_169919.1">
    <property type="nucleotide sequence ID" value="NC_006570.2"/>
</dbReference>
<dbReference type="SMR" id="Q5NGC3"/>
<dbReference type="IntAct" id="Q5NGC3">
    <property type="interactions" value="2"/>
</dbReference>
<dbReference type="STRING" id="177416.FTT_0923"/>
<dbReference type="DNASU" id="3192468"/>
<dbReference type="EnsemblBacteria" id="CAG45556">
    <property type="protein sequence ID" value="CAG45556"/>
    <property type="gene ID" value="FTT_0923"/>
</dbReference>
<dbReference type="KEGG" id="ftu:FTT_0923"/>
<dbReference type="eggNOG" id="COG0116">
    <property type="taxonomic scope" value="Bacteria"/>
</dbReference>
<dbReference type="eggNOG" id="COG1092">
    <property type="taxonomic scope" value="Bacteria"/>
</dbReference>
<dbReference type="OrthoDB" id="9809404at2"/>
<dbReference type="Proteomes" id="UP000001174">
    <property type="component" value="Chromosome"/>
</dbReference>
<dbReference type="GO" id="GO:0005737">
    <property type="term" value="C:cytoplasm"/>
    <property type="evidence" value="ECO:0007669"/>
    <property type="project" value="UniProtKB-SubCell"/>
</dbReference>
<dbReference type="GO" id="GO:0052915">
    <property type="term" value="F:23S rRNA (guanine(2445)-N(2))-methyltransferase activity"/>
    <property type="evidence" value="ECO:0007669"/>
    <property type="project" value="UniProtKB-UniRule"/>
</dbReference>
<dbReference type="GO" id="GO:0003723">
    <property type="term" value="F:RNA binding"/>
    <property type="evidence" value="ECO:0007669"/>
    <property type="project" value="UniProtKB-KW"/>
</dbReference>
<dbReference type="GO" id="GO:0070043">
    <property type="term" value="F:rRNA (guanine-N7-)-methyltransferase activity"/>
    <property type="evidence" value="ECO:0007669"/>
    <property type="project" value="UniProtKB-UniRule"/>
</dbReference>
<dbReference type="CDD" id="cd02440">
    <property type="entry name" value="AdoMet_MTases"/>
    <property type="match status" value="1"/>
</dbReference>
<dbReference type="CDD" id="cd11715">
    <property type="entry name" value="THUMP_AdoMetMT"/>
    <property type="match status" value="1"/>
</dbReference>
<dbReference type="Gene3D" id="3.30.2130.30">
    <property type="match status" value="1"/>
</dbReference>
<dbReference type="Gene3D" id="3.30.750.80">
    <property type="entry name" value="RNA methyltransferase domain (HRMD) like"/>
    <property type="match status" value="1"/>
</dbReference>
<dbReference type="Gene3D" id="3.40.50.150">
    <property type="entry name" value="Vaccinia Virus protein VP39"/>
    <property type="match status" value="2"/>
</dbReference>
<dbReference type="HAMAP" id="MF_01858">
    <property type="entry name" value="23SrRNA_methyltr_KL"/>
    <property type="match status" value="1"/>
</dbReference>
<dbReference type="InterPro" id="IPR017244">
    <property type="entry name" value="23SrRNA_methyltr_KL"/>
</dbReference>
<dbReference type="InterPro" id="IPR002052">
    <property type="entry name" value="DNA_methylase_N6_adenine_CS"/>
</dbReference>
<dbReference type="InterPro" id="IPR000241">
    <property type="entry name" value="RlmKL-like_Mtase"/>
</dbReference>
<dbReference type="InterPro" id="IPR053943">
    <property type="entry name" value="RlmKL-like_Mtase_CS"/>
</dbReference>
<dbReference type="InterPro" id="IPR054170">
    <property type="entry name" value="RlmL_1st"/>
</dbReference>
<dbReference type="InterPro" id="IPR019614">
    <property type="entry name" value="SAM-dep_methyl-trfase"/>
</dbReference>
<dbReference type="InterPro" id="IPR029063">
    <property type="entry name" value="SAM-dependent_MTases_sf"/>
</dbReference>
<dbReference type="InterPro" id="IPR004114">
    <property type="entry name" value="THUMP_dom"/>
</dbReference>
<dbReference type="NCBIfam" id="NF008748">
    <property type="entry name" value="PRK11783.1"/>
    <property type="match status" value="1"/>
</dbReference>
<dbReference type="PANTHER" id="PTHR47313">
    <property type="entry name" value="RIBOSOMAL RNA LARGE SUBUNIT METHYLTRANSFERASE K/L"/>
    <property type="match status" value="1"/>
</dbReference>
<dbReference type="PANTHER" id="PTHR47313:SF1">
    <property type="entry name" value="RIBOSOMAL RNA LARGE SUBUNIT METHYLTRANSFERASE K_L"/>
    <property type="match status" value="1"/>
</dbReference>
<dbReference type="Pfam" id="PF10672">
    <property type="entry name" value="Methyltrans_SAM"/>
    <property type="match status" value="1"/>
</dbReference>
<dbReference type="Pfam" id="PF22020">
    <property type="entry name" value="RlmL_1st"/>
    <property type="match status" value="1"/>
</dbReference>
<dbReference type="Pfam" id="PF02926">
    <property type="entry name" value="THUMP"/>
    <property type="match status" value="1"/>
</dbReference>
<dbReference type="Pfam" id="PF01170">
    <property type="entry name" value="UPF0020"/>
    <property type="match status" value="1"/>
</dbReference>
<dbReference type="PIRSF" id="PIRSF037618">
    <property type="entry name" value="RNA_Mtase_bacteria_prd"/>
    <property type="match status" value="1"/>
</dbReference>
<dbReference type="SMART" id="SM00981">
    <property type="entry name" value="THUMP"/>
    <property type="match status" value="1"/>
</dbReference>
<dbReference type="SUPFAM" id="SSF53335">
    <property type="entry name" value="S-adenosyl-L-methionine-dependent methyltransferases"/>
    <property type="match status" value="2"/>
</dbReference>
<dbReference type="PROSITE" id="PS51165">
    <property type="entry name" value="THUMP"/>
    <property type="match status" value="1"/>
</dbReference>
<dbReference type="PROSITE" id="PS01261">
    <property type="entry name" value="UPF0020"/>
    <property type="match status" value="1"/>
</dbReference>